<proteinExistence type="inferred from homology"/>
<sequence length="288" mass="33540">MKYVFIEKHQAEFSIKAMCRVLRVARSGWYTWCQRRTRISTRQQFRQHCDSVVLAAFTRSKQRYGAPRLTDELRAQGYPFNVKTVAASLRRQGLRAKASRKFSPVSYRAHGLPVSENLLEQDFYASGPNQKWAGDITYLRTDEGWLYLAVVIDLWSRAVIGWSMSPRMTAQLACDALQMALWRRKRPRNVIVHTDRGGQYCSADYQAQLKRHNLRGSMSAKGCCYDNACVESFFHSLKVECIHGEHFISREIMRATVFNYIECDYNRWRRHSWCGGLSPEQFENKNLA</sequence>
<organism>
    <name type="scientific">Escherichia coli (strain K12)</name>
    <dbReference type="NCBI Taxonomy" id="83333"/>
    <lineage>
        <taxon>Bacteria</taxon>
        <taxon>Pseudomonadati</taxon>
        <taxon>Pseudomonadota</taxon>
        <taxon>Gammaproteobacteria</taxon>
        <taxon>Enterobacterales</taxon>
        <taxon>Enterobacteriaceae</taxon>
        <taxon>Escherichia</taxon>
    </lineage>
</organism>
<evidence type="ECO:0000255" key="1">
    <source>
        <dbReference type="PROSITE-ProRule" id="PRU00457"/>
    </source>
</evidence>
<evidence type="ECO:0000305" key="2"/>
<keyword id="KW-0233">DNA recombination</keyword>
<keyword id="KW-0238">DNA-binding</keyword>
<keyword id="KW-1185">Reference proteome</keyword>
<keyword id="KW-0814">Transposable element</keyword>
<keyword id="KW-0815">Transposition</keyword>
<accession>P0CF82</accession>
<accession>O08009</accession>
<accession>O08012</accession>
<accession>O08304</accession>
<accession>P05822</accession>
<accession>P77673</accession>
<accession>Q2MBI8</accession>
<reference key="1">
    <citation type="submission" date="1997-01" db="EMBL/GenBank/DDBJ databases">
        <title>Sequence of minutes 4-25 of Escherichia coli.</title>
        <authorList>
            <person name="Chung E."/>
            <person name="Allen E."/>
            <person name="Araujo R."/>
            <person name="Aparicio A.M."/>
            <person name="Davis K."/>
            <person name="Duncan M."/>
            <person name="Federspiel N."/>
            <person name="Hyman R."/>
            <person name="Kalman S."/>
            <person name="Komp C."/>
            <person name="Kurdi O."/>
            <person name="Lew H."/>
            <person name="Lin D."/>
            <person name="Namath A."/>
            <person name="Oefner P."/>
            <person name="Roberts D."/>
            <person name="Schramm S."/>
            <person name="Davis R.W."/>
        </authorList>
    </citation>
    <scope>NUCLEOTIDE SEQUENCE [LARGE SCALE GENOMIC DNA]</scope>
    <source>
        <strain>K12 / MG1655 / ATCC 47076</strain>
    </source>
</reference>
<reference key="2">
    <citation type="journal article" date="1997" name="Science">
        <title>The complete genome sequence of Escherichia coli K-12.</title>
        <authorList>
            <person name="Blattner F.R."/>
            <person name="Plunkett G. III"/>
            <person name="Bloch C.A."/>
            <person name="Perna N.T."/>
            <person name="Burland V."/>
            <person name="Riley M."/>
            <person name="Collado-Vides J."/>
            <person name="Glasner J.D."/>
            <person name="Rode C.K."/>
            <person name="Mayhew G.F."/>
            <person name="Gregor J."/>
            <person name="Davis N.W."/>
            <person name="Kirkpatrick H.A."/>
            <person name="Goeden M.A."/>
            <person name="Rose D.J."/>
            <person name="Mau B."/>
            <person name="Shao Y."/>
        </authorList>
    </citation>
    <scope>NUCLEOTIDE SEQUENCE [LARGE SCALE GENOMIC DNA]</scope>
    <source>
        <strain>K12 / MG1655 / ATCC 47076</strain>
    </source>
</reference>
<reference key="3">
    <citation type="journal article" date="2006" name="Mol. Syst. Biol.">
        <title>Highly accurate genome sequences of Escherichia coli K-12 strains MG1655 and W3110.</title>
        <authorList>
            <person name="Hayashi K."/>
            <person name="Morooka N."/>
            <person name="Yamamoto Y."/>
            <person name="Fujita K."/>
            <person name="Isono K."/>
            <person name="Choi S."/>
            <person name="Ohtsubo E."/>
            <person name="Baba T."/>
            <person name="Wanner B.L."/>
            <person name="Mori H."/>
            <person name="Horiuchi T."/>
        </authorList>
    </citation>
    <scope>NUCLEOTIDE SEQUENCE [LARGE SCALE GENOMIC DNA]</scope>
    <source>
        <strain>K12 / W3110 / ATCC 27325 / DSM 5911</strain>
    </source>
</reference>
<name>INSF4_ECOLI</name>
<dbReference type="EMBL" id="U00096">
    <property type="protein sequence ID" value="AAC74111.1"/>
    <property type="molecule type" value="Genomic_DNA"/>
</dbReference>
<dbReference type="EMBL" id="AP009048">
    <property type="protein sequence ID" value="BAE76368.1"/>
    <property type="molecule type" value="Genomic_DNA"/>
</dbReference>
<dbReference type="PIR" id="C64756">
    <property type="entry name" value="TQECI3"/>
</dbReference>
<dbReference type="RefSeq" id="NP_061381.1">
    <property type="nucleotide sequence ID" value="NC_002483.1"/>
</dbReference>
<dbReference type="RefSeq" id="NP_415545.1">
    <property type="nucleotide sequence ID" value="NC_000913.3"/>
</dbReference>
<dbReference type="SMR" id="P0CF82"/>
<dbReference type="FunCoup" id="P0CF82">
    <property type="interactions" value="11"/>
</dbReference>
<dbReference type="EnsemblBacteria" id="AAC74111">
    <property type="protein sequence ID" value="AAC74111"/>
    <property type="gene ID" value="b1026"/>
</dbReference>
<dbReference type="GeneID" id="945587"/>
<dbReference type="KEGG" id="ecj:JW1012"/>
<dbReference type="KEGG" id="eco:b0299"/>
<dbReference type="KEGG" id="eco:b0372"/>
<dbReference type="KEGG" id="eco:b0541"/>
<dbReference type="KEGG" id="eco:b1026"/>
<dbReference type="KEGG" id="eco:b2089"/>
<dbReference type="KEGG" id="ecoc:C3026_01470"/>
<dbReference type="KEGG" id="ecoc:C3026_02660"/>
<dbReference type="KEGG" id="ecoc:C3026_06250"/>
<dbReference type="KEGG" id="ecoc:C3026_11730"/>
<dbReference type="KEGG" id="ecoc:C3026_24100"/>
<dbReference type="KEGG" id="ecoc:C3026_24645"/>
<dbReference type="EchoBASE" id="EB4720"/>
<dbReference type="HOGENOM" id="CLU_027402_4_2_6"/>
<dbReference type="InParanoid" id="P0CF82"/>
<dbReference type="OMA" id="DNARCES"/>
<dbReference type="PhylomeDB" id="P0CF82"/>
<dbReference type="BioCyc" id="EcoCyc:MONOMER0-4443"/>
<dbReference type="PRO" id="PR:P0CF82"/>
<dbReference type="Proteomes" id="UP000000625">
    <property type="component" value="Chromosome"/>
</dbReference>
<dbReference type="GO" id="GO:0003677">
    <property type="term" value="F:DNA binding"/>
    <property type="evidence" value="ECO:0007669"/>
    <property type="project" value="UniProtKB-KW"/>
</dbReference>
<dbReference type="GO" id="GO:0015074">
    <property type="term" value="P:DNA integration"/>
    <property type="evidence" value="ECO:0007669"/>
    <property type="project" value="InterPro"/>
</dbReference>
<dbReference type="GO" id="GO:0006310">
    <property type="term" value="P:DNA recombination"/>
    <property type="evidence" value="ECO:0007669"/>
    <property type="project" value="UniProtKB-KW"/>
</dbReference>
<dbReference type="GO" id="GO:0032196">
    <property type="term" value="P:transposition"/>
    <property type="evidence" value="ECO:0007669"/>
    <property type="project" value="UniProtKB-KW"/>
</dbReference>
<dbReference type="FunFam" id="3.30.420.10:FF:000030">
    <property type="entry name" value="IS3, transposase orfB"/>
    <property type="match status" value="1"/>
</dbReference>
<dbReference type="Gene3D" id="3.30.420.10">
    <property type="entry name" value="Ribonuclease H-like superfamily/Ribonuclease H"/>
    <property type="match status" value="1"/>
</dbReference>
<dbReference type="InterPro" id="IPR025948">
    <property type="entry name" value="HTH-like_dom"/>
</dbReference>
<dbReference type="InterPro" id="IPR001584">
    <property type="entry name" value="Integrase_cat-core"/>
</dbReference>
<dbReference type="InterPro" id="IPR012337">
    <property type="entry name" value="RNaseH-like_sf"/>
</dbReference>
<dbReference type="InterPro" id="IPR036397">
    <property type="entry name" value="RNaseH_sf"/>
</dbReference>
<dbReference type="InterPro" id="IPR048020">
    <property type="entry name" value="Transpos_IS3"/>
</dbReference>
<dbReference type="InterPro" id="IPR050900">
    <property type="entry name" value="Transposase_IS3/IS150/IS904"/>
</dbReference>
<dbReference type="NCBIfam" id="NF033516">
    <property type="entry name" value="transpos_IS3"/>
    <property type="match status" value="1"/>
</dbReference>
<dbReference type="PANTHER" id="PTHR46889:SF6">
    <property type="entry name" value="TRANSPOSASE INSF FOR INSERTION SEQUENCE IS3B"/>
    <property type="match status" value="1"/>
</dbReference>
<dbReference type="PANTHER" id="PTHR46889">
    <property type="entry name" value="TRANSPOSASE INSF FOR INSERTION SEQUENCE IS3B-RELATED"/>
    <property type="match status" value="1"/>
</dbReference>
<dbReference type="Pfam" id="PF13276">
    <property type="entry name" value="HTH_21"/>
    <property type="match status" value="1"/>
</dbReference>
<dbReference type="Pfam" id="PF00665">
    <property type="entry name" value="rve"/>
    <property type="match status" value="1"/>
</dbReference>
<dbReference type="Pfam" id="PF13333">
    <property type="entry name" value="rve_2"/>
    <property type="match status" value="1"/>
</dbReference>
<dbReference type="SUPFAM" id="SSF53098">
    <property type="entry name" value="Ribonuclease H-like"/>
    <property type="match status" value="1"/>
</dbReference>
<dbReference type="PROSITE" id="PS50994">
    <property type="entry name" value="INTEGRASE"/>
    <property type="match status" value="1"/>
</dbReference>
<comment type="function">
    <text>Involved in the transposition of the insertion sequence IS3.</text>
</comment>
<comment type="similarity">
    <text evidence="2">Belongs to the transposase IS3/IS150/IS904 family.</text>
</comment>
<feature type="chain" id="PRO_0000394036" description="Transposase InsF for insertion sequence IS3D">
    <location>
        <begin position="1"/>
        <end position="288"/>
    </location>
</feature>
<feature type="domain" description="Integrase catalytic" evidence="1">
    <location>
        <begin position="124"/>
        <end position="287"/>
    </location>
</feature>
<protein>
    <recommendedName>
        <fullName>Transposase InsF for insertion sequence IS3D</fullName>
    </recommendedName>
</protein>
<gene>
    <name type="primary">insF4</name>
    <name type="ordered locus">b1026</name>
    <name type="ordered locus">JW1012</name>
</gene>